<proteinExistence type="inferred from homology"/>
<sequence length="67" mass="7611">MPKLKTKSGAKKRFKITGTGKVMYAQAGKRHGMIKRTNKQIRNLRGTTTLFEGDAANVKKYFLPNQR</sequence>
<protein>
    <recommendedName>
        <fullName evidence="1">Large ribosomal subunit protein bL35</fullName>
    </recommendedName>
    <alternativeName>
        <fullName evidence="2">50S ribosomal protein L35</fullName>
    </alternativeName>
</protein>
<evidence type="ECO:0000255" key="1">
    <source>
        <dbReference type="HAMAP-Rule" id="MF_00514"/>
    </source>
</evidence>
<evidence type="ECO:0000305" key="2"/>
<dbReference type="EMBL" id="CP001298">
    <property type="protein sequence ID" value="ACK82772.1"/>
    <property type="molecule type" value="Genomic_DNA"/>
</dbReference>
<dbReference type="RefSeq" id="WP_003602670.1">
    <property type="nucleotide sequence ID" value="NC_011757.1"/>
</dbReference>
<dbReference type="SMR" id="B7KVA1"/>
<dbReference type="GeneID" id="72989284"/>
<dbReference type="KEGG" id="mch:Mchl_1909"/>
<dbReference type="HOGENOM" id="CLU_169643_2_1_5"/>
<dbReference type="Proteomes" id="UP000002385">
    <property type="component" value="Chromosome"/>
</dbReference>
<dbReference type="GO" id="GO:0022625">
    <property type="term" value="C:cytosolic large ribosomal subunit"/>
    <property type="evidence" value="ECO:0007669"/>
    <property type="project" value="TreeGrafter"/>
</dbReference>
<dbReference type="GO" id="GO:0003735">
    <property type="term" value="F:structural constituent of ribosome"/>
    <property type="evidence" value="ECO:0007669"/>
    <property type="project" value="InterPro"/>
</dbReference>
<dbReference type="GO" id="GO:0006412">
    <property type="term" value="P:translation"/>
    <property type="evidence" value="ECO:0007669"/>
    <property type="project" value="UniProtKB-UniRule"/>
</dbReference>
<dbReference type="FunFam" id="4.10.410.60:FF:000001">
    <property type="entry name" value="50S ribosomal protein L35"/>
    <property type="match status" value="1"/>
</dbReference>
<dbReference type="Gene3D" id="4.10.410.60">
    <property type="match status" value="1"/>
</dbReference>
<dbReference type="HAMAP" id="MF_00514">
    <property type="entry name" value="Ribosomal_bL35"/>
    <property type="match status" value="1"/>
</dbReference>
<dbReference type="InterPro" id="IPR001706">
    <property type="entry name" value="Ribosomal_bL35"/>
</dbReference>
<dbReference type="InterPro" id="IPR021137">
    <property type="entry name" value="Ribosomal_bL35-like"/>
</dbReference>
<dbReference type="InterPro" id="IPR018265">
    <property type="entry name" value="Ribosomal_bL35_CS"/>
</dbReference>
<dbReference type="InterPro" id="IPR037229">
    <property type="entry name" value="Ribosomal_bL35_sf"/>
</dbReference>
<dbReference type="NCBIfam" id="TIGR00001">
    <property type="entry name" value="rpmI_bact"/>
    <property type="match status" value="1"/>
</dbReference>
<dbReference type="PANTHER" id="PTHR33343">
    <property type="entry name" value="54S RIBOSOMAL PROTEIN BL35M"/>
    <property type="match status" value="1"/>
</dbReference>
<dbReference type="PANTHER" id="PTHR33343:SF1">
    <property type="entry name" value="LARGE RIBOSOMAL SUBUNIT PROTEIN BL35M"/>
    <property type="match status" value="1"/>
</dbReference>
<dbReference type="Pfam" id="PF01632">
    <property type="entry name" value="Ribosomal_L35p"/>
    <property type="match status" value="1"/>
</dbReference>
<dbReference type="PRINTS" id="PR00064">
    <property type="entry name" value="RIBOSOMALL35"/>
</dbReference>
<dbReference type="SUPFAM" id="SSF143034">
    <property type="entry name" value="L35p-like"/>
    <property type="match status" value="1"/>
</dbReference>
<dbReference type="PROSITE" id="PS00936">
    <property type="entry name" value="RIBOSOMAL_L35"/>
    <property type="match status" value="1"/>
</dbReference>
<name>RL35_METC4</name>
<organism>
    <name type="scientific">Methylorubrum extorquens (strain CM4 / NCIMB 13688)</name>
    <name type="common">Methylobacterium extorquens</name>
    <dbReference type="NCBI Taxonomy" id="440085"/>
    <lineage>
        <taxon>Bacteria</taxon>
        <taxon>Pseudomonadati</taxon>
        <taxon>Pseudomonadota</taxon>
        <taxon>Alphaproteobacteria</taxon>
        <taxon>Hyphomicrobiales</taxon>
        <taxon>Methylobacteriaceae</taxon>
        <taxon>Methylorubrum</taxon>
    </lineage>
</organism>
<comment type="similarity">
    <text evidence="1">Belongs to the bacterial ribosomal protein bL35 family.</text>
</comment>
<reference key="1">
    <citation type="submission" date="2008-12" db="EMBL/GenBank/DDBJ databases">
        <title>Complete sequence of chromosome of Methylobacterium chloromethanicum CM4.</title>
        <authorList>
            <consortium name="US DOE Joint Genome Institute"/>
            <person name="Lucas S."/>
            <person name="Copeland A."/>
            <person name="Lapidus A."/>
            <person name="Glavina del Rio T."/>
            <person name="Dalin E."/>
            <person name="Tice H."/>
            <person name="Bruce D."/>
            <person name="Goodwin L."/>
            <person name="Pitluck S."/>
            <person name="Chertkov O."/>
            <person name="Brettin T."/>
            <person name="Detter J.C."/>
            <person name="Han C."/>
            <person name="Larimer F."/>
            <person name="Land M."/>
            <person name="Hauser L."/>
            <person name="Kyrpides N."/>
            <person name="Mikhailova N."/>
            <person name="Marx C."/>
            <person name="Richardson P."/>
        </authorList>
    </citation>
    <scope>NUCLEOTIDE SEQUENCE [LARGE SCALE GENOMIC DNA]</scope>
    <source>
        <strain>CM4 / NCIMB 13688</strain>
    </source>
</reference>
<gene>
    <name evidence="1" type="primary">rpmI</name>
    <name type="ordered locus">Mchl_1909</name>
</gene>
<feature type="chain" id="PRO_1000194080" description="Large ribosomal subunit protein bL35">
    <location>
        <begin position="1"/>
        <end position="67"/>
    </location>
</feature>
<accession>B7KVA1</accession>
<keyword id="KW-0687">Ribonucleoprotein</keyword>
<keyword id="KW-0689">Ribosomal protein</keyword>